<keyword id="KW-1015">Disulfide bond</keyword>
<keyword id="KW-0964">Secreted</keyword>
<keyword id="KW-0732">Signal</keyword>
<keyword id="KW-0800">Toxin</keyword>
<comment type="subcellular location">
    <subcellularLocation>
        <location evidence="4">Secreted</location>
    </subcellularLocation>
</comment>
<comment type="tissue specificity">
    <text evidence="4">Expressed by the venom gland.</text>
</comment>
<comment type="PTM">
    <text evidence="3">Contains 3 disulfide bonds.</text>
</comment>
<comment type="similarity">
    <text evidence="3">Belongs to the scoloptoxin-12 family.</text>
</comment>
<comment type="caution">
    <text evidence="4">All E.rubripes family members described in 'Undeheim et al., 2014' have not been imported into UniProtKB. Please, refer to this paper to access them.</text>
</comment>
<comment type="online information" name="National Center for Biotechnology Information (NCBI)">
    <link uri="https://www.ncbi.nlm.nih.gov/nuccore/GASI01000119"/>
</comment>
<name>TXC1A_ETHRU</name>
<proteinExistence type="inferred from homology"/>
<protein>
    <recommendedName>
        <fullName evidence="2">U-scoloptoxin(12)-Er1a</fullName>
        <shortName evidence="2">U-SLPTX(12)-Er1a</shortName>
    </recommendedName>
</protein>
<evidence type="ECO:0000255" key="1"/>
<evidence type="ECO:0000303" key="2">
    <source>
    </source>
</evidence>
<evidence type="ECO:0000305" key="3"/>
<evidence type="ECO:0000305" key="4">
    <source>
    </source>
</evidence>
<sequence length="89" mass="10413">MKGLFLVVFLMWFVSQMNTEETEEYVQFNVIEDPYPRLPRRNYSCSTMACPARHICGCMPTPITPETPYRDLDCGCYHEYDMMPVCEGL</sequence>
<organism>
    <name type="scientific">Ethmostigmus rubripes</name>
    <name type="common">Giant centipede</name>
    <dbReference type="NCBI Taxonomy" id="62613"/>
    <lineage>
        <taxon>Eukaryota</taxon>
        <taxon>Metazoa</taxon>
        <taxon>Ecdysozoa</taxon>
        <taxon>Arthropoda</taxon>
        <taxon>Myriapoda</taxon>
        <taxon>Chilopoda</taxon>
        <taxon>Pleurostigmophora</taxon>
        <taxon>Scolopendromorpha</taxon>
        <taxon>Scolopendridae</taxon>
        <taxon>Ethmostigmus</taxon>
    </lineage>
</organism>
<feature type="signal peptide" evidence="1">
    <location>
        <begin position="1"/>
        <end position="22"/>
    </location>
</feature>
<feature type="chain" id="PRO_0000446778" description="U-scoloptoxin(12)-Er1a" evidence="3">
    <location>
        <begin position="23"/>
        <end position="89"/>
    </location>
</feature>
<reference key="1">
    <citation type="journal article" date="2014" name="Mol. Biol. Evol.">
        <title>Clawing through evolution: toxin diversification and convergence in the ancient lineage Chilopoda (centipedes).</title>
        <authorList>
            <person name="Undheim E.A."/>
            <person name="Jones A."/>
            <person name="Clauser K.R."/>
            <person name="Holland J.W."/>
            <person name="Pineda S.S."/>
            <person name="King G.F."/>
            <person name="Fry B.G."/>
        </authorList>
    </citation>
    <scope>NUCLEOTIDE SEQUENCE [MRNA]</scope>
    <scope>NOMENCLATURE</scope>
    <source>
        <tissue>Venom gland</tissue>
    </source>
</reference>
<dbReference type="GO" id="GO:0005576">
    <property type="term" value="C:extracellular region"/>
    <property type="evidence" value="ECO:0007669"/>
    <property type="project" value="UniProtKB-SubCell"/>
</dbReference>
<dbReference type="GO" id="GO:0090729">
    <property type="term" value="F:toxin activity"/>
    <property type="evidence" value="ECO:0007669"/>
    <property type="project" value="UniProtKB-KW"/>
</dbReference>
<accession>P0DQA8</accession>